<comment type="function">
    <text evidence="1">Part of the high-affinity ATP-driven potassium transport (or Kdp) system, which catalyzes the hydrolysis of ATP coupled with the electrogenic transport of potassium into the cytoplasm. This subunit binds the periplasmic potassium ions and delivers the ions to the membrane domain of KdpB through an intramembrane tunnel.</text>
</comment>
<comment type="subunit">
    <text evidence="1">The system is composed of three essential subunits: KdpA, KdpB and KdpC.</text>
</comment>
<comment type="subcellular location">
    <subcellularLocation>
        <location evidence="1">Cell inner membrane</location>
        <topology evidence="1">Multi-pass membrane protein</topology>
    </subcellularLocation>
</comment>
<comment type="similarity">
    <text evidence="1">Belongs to the KdpA family.</text>
</comment>
<organism>
    <name type="scientific">Enterobacter sp. (strain 638)</name>
    <dbReference type="NCBI Taxonomy" id="399742"/>
    <lineage>
        <taxon>Bacteria</taxon>
        <taxon>Pseudomonadati</taxon>
        <taxon>Pseudomonadota</taxon>
        <taxon>Gammaproteobacteria</taxon>
        <taxon>Enterobacterales</taxon>
        <taxon>Enterobacteriaceae</taxon>
        <taxon>Enterobacter</taxon>
    </lineage>
</organism>
<evidence type="ECO:0000255" key="1">
    <source>
        <dbReference type="HAMAP-Rule" id="MF_00275"/>
    </source>
</evidence>
<name>KDPA_ENT38</name>
<accession>A4W861</accession>
<reference key="1">
    <citation type="journal article" date="2010" name="PLoS Genet.">
        <title>Genome sequence of the plant growth promoting endophytic bacterium Enterobacter sp. 638.</title>
        <authorList>
            <person name="Taghavi S."/>
            <person name="van der Lelie D."/>
            <person name="Hoffman A."/>
            <person name="Zhang Y.B."/>
            <person name="Walla M.D."/>
            <person name="Vangronsveld J."/>
            <person name="Newman L."/>
            <person name="Monchy S."/>
        </authorList>
    </citation>
    <scope>NUCLEOTIDE SEQUENCE [LARGE SCALE GENOMIC DNA]</scope>
    <source>
        <strain>638</strain>
    </source>
</reference>
<feature type="chain" id="PRO_1000059211" description="Potassium-transporting ATPase potassium-binding subunit">
    <location>
        <begin position="1"/>
        <end position="559"/>
    </location>
</feature>
<feature type="transmembrane region" description="Helical" evidence="1">
    <location>
        <begin position="6"/>
        <end position="26"/>
    </location>
</feature>
<feature type="transmembrane region" description="Helical" evidence="1">
    <location>
        <begin position="63"/>
        <end position="83"/>
    </location>
</feature>
<feature type="transmembrane region" description="Helical" evidence="1">
    <location>
        <begin position="131"/>
        <end position="151"/>
    </location>
</feature>
<feature type="transmembrane region" description="Helical" evidence="1">
    <location>
        <begin position="173"/>
        <end position="193"/>
    </location>
</feature>
<feature type="transmembrane region" description="Helical" evidence="1">
    <location>
        <begin position="253"/>
        <end position="273"/>
    </location>
</feature>
<feature type="transmembrane region" description="Helical" evidence="1">
    <location>
        <begin position="283"/>
        <end position="303"/>
    </location>
</feature>
<feature type="transmembrane region" description="Helical" evidence="1">
    <location>
        <begin position="327"/>
        <end position="347"/>
    </location>
</feature>
<feature type="transmembrane region" description="Helical" evidence="1">
    <location>
        <begin position="356"/>
        <end position="376"/>
    </location>
</feature>
<feature type="transmembrane region" description="Helical" evidence="1">
    <location>
        <begin position="379"/>
        <end position="399"/>
    </location>
</feature>
<feature type="transmembrane region" description="Helical" evidence="1">
    <location>
        <begin position="416"/>
        <end position="436"/>
    </location>
</feature>
<feature type="transmembrane region" description="Helical" evidence="1">
    <location>
        <begin position="484"/>
        <end position="504"/>
    </location>
</feature>
<feature type="transmembrane region" description="Helical" evidence="1">
    <location>
        <begin position="524"/>
        <end position="544"/>
    </location>
</feature>
<keyword id="KW-0997">Cell inner membrane</keyword>
<keyword id="KW-1003">Cell membrane</keyword>
<keyword id="KW-0406">Ion transport</keyword>
<keyword id="KW-0472">Membrane</keyword>
<keyword id="KW-0630">Potassium</keyword>
<keyword id="KW-0633">Potassium transport</keyword>
<keyword id="KW-0812">Transmembrane</keyword>
<keyword id="KW-1133">Transmembrane helix</keyword>
<keyword id="KW-0813">Transport</keyword>
<gene>
    <name evidence="1" type="primary">kdpA</name>
    <name type="ordered locus">Ent638_1210</name>
</gene>
<sequence length="559" mass="59771">MAAQGFLLIASFLLLLFLLARPLGNVLARMINGVPLPLVGGVENGVWRVLGIQNQEMNWRQYLLAILLLNVFGLFVLFAMLMLQGILPLNPQQLPGLSWHLALNTAVSFVSNTNWQSYAGETTLSYFSQMVGLTVQNFLSAASGIAVIFALTRAFARQKVNTLGNAWVDLTRITLWVLLPISLVIALFFIQQGTLQNLLPYASYTSLEGVKQMLPMGPVASQEAIKMLGTNGGGFFNANSSHPFENPTALTNFVQMLAIFLIPAALCFAFGDVVNDRRQGRTLLWAMSLIFVVCAALVMWAEWHGNAHFMQLGVDSNINMEGKESRFGILASSLYAVVTTAASCGAVNAMHDSFTALGGMIPLWLMQIGEVVFGGVGSGLYGMLLFVLLAVFIAGLMIGRTPEYLGKKIDVREMKLTALAILVTPALVLMGTALALMTDAGRSGIFNPGIHGFSEVLYAVSSAANNNGSAFAGLSANSPFWNCLLAFCMFVGRFGVIVPVMAIAGSLVSKNIQPTSSGTLPTHGALFVGLLIGTVLLVGALTFIPALALGPVAEHLSLR</sequence>
<dbReference type="EMBL" id="CP000653">
    <property type="protein sequence ID" value="ABP59891.1"/>
    <property type="molecule type" value="Genomic_DNA"/>
</dbReference>
<dbReference type="RefSeq" id="WP_012016610.1">
    <property type="nucleotide sequence ID" value="NC_009436.1"/>
</dbReference>
<dbReference type="SMR" id="A4W861"/>
<dbReference type="STRING" id="399742.Ent638_1210"/>
<dbReference type="KEGG" id="ent:Ent638_1210"/>
<dbReference type="eggNOG" id="COG2060">
    <property type="taxonomic scope" value="Bacteria"/>
</dbReference>
<dbReference type="HOGENOM" id="CLU_018614_3_0_6"/>
<dbReference type="OrthoDB" id="9763796at2"/>
<dbReference type="Proteomes" id="UP000000230">
    <property type="component" value="Chromosome"/>
</dbReference>
<dbReference type="GO" id="GO:0005886">
    <property type="term" value="C:plasma membrane"/>
    <property type="evidence" value="ECO:0007669"/>
    <property type="project" value="UniProtKB-SubCell"/>
</dbReference>
<dbReference type="GO" id="GO:0008556">
    <property type="term" value="F:P-type potassium transmembrane transporter activity"/>
    <property type="evidence" value="ECO:0007669"/>
    <property type="project" value="InterPro"/>
</dbReference>
<dbReference type="GO" id="GO:0030955">
    <property type="term" value="F:potassium ion binding"/>
    <property type="evidence" value="ECO:0007669"/>
    <property type="project" value="UniProtKB-UniRule"/>
</dbReference>
<dbReference type="HAMAP" id="MF_00275">
    <property type="entry name" value="KdpA"/>
    <property type="match status" value="1"/>
</dbReference>
<dbReference type="InterPro" id="IPR004623">
    <property type="entry name" value="KdpA"/>
</dbReference>
<dbReference type="NCBIfam" id="TIGR00680">
    <property type="entry name" value="kdpA"/>
    <property type="match status" value="1"/>
</dbReference>
<dbReference type="PANTHER" id="PTHR30607">
    <property type="entry name" value="POTASSIUM-TRANSPORTING ATPASE A CHAIN"/>
    <property type="match status" value="1"/>
</dbReference>
<dbReference type="PANTHER" id="PTHR30607:SF2">
    <property type="entry name" value="POTASSIUM-TRANSPORTING ATPASE POTASSIUM-BINDING SUBUNIT"/>
    <property type="match status" value="1"/>
</dbReference>
<dbReference type="Pfam" id="PF03814">
    <property type="entry name" value="KdpA"/>
    <property type="match status" value="1"/>
</dbReference>
<dbReference type="PIRSF" id="PIRSF001294">
    <property type="entry name" value="K_ATPaseA"/>
    <property type="match status" value="1"/>
</dbReference>
<protein>
    <recommendedName>
        <fullName evidence="1">Potassium-transporting ATPase potassium-binding subunit</fullName>
    </recommendedName>
    <alternativeName>
        <fullName evidence="1">ATP phosphohydrolase [potassium-transporting] A chain</fullName>
    </alternativeName>
    <alternativeName>
        <fullName evidence="1">Potassium-binding and translocating subunit A</fullName>
    </alternativeName>
    <alternativeName>
        <fullName evidence="1">Potassium-translocating ATPase A chain</fullName>
    </alternativeName>
</protein>
<proteinExistence type="inferred from homology"/>